<reference key="1">
    <citation type="journal article" date="2005" name="PLoS Biol.">
        <title>The genomes of Oryza sativa: a history of duplications.</title>
        <authorList>
            <person name="Yu J."/>
            <person name="Wang J."/>
            <person name="Lin W."/>
            <person name="Li S."/>
            <person name="Li H."/>
            <person name="Zhou J."/>
            <person name="Ni P."/>
            <person name="Dong W."/>
            <person name="Hu S."/>
            <person name="Zeng C."/>
            <person name="Zhang J."/>
            <person name="Zhang Y."/>
            <person name="Li R."/>
            <person name="Xu Z."/>
            <person name="Li S."/>
            <person name="Li X."/>
            <person name="Zheng H."/>
            <person name="Cong L."/>
            <person name="Lin L."/>
            <person name="Yin J."/>
            <person name="Geng J."/>
            <person name="Li G."/>
            <person name="Shi J."/>
            <person name="Liu J."/>
            <person name="Lv H."/>
            <person name="Li J."/>
            <person name="Wang J."/>
            <person name="Deng Y."/>
            <person name="Ran L."/>
            <person name="Shi X."/>
            <person name="Wang X."/>
            <person name="Wu Q."/>
            <person name="Li C."/>
            <person name="Ren X."/>
            <person name="Wang J."/>
            <person name="Wang X."/>
            <person name="Li D."/>
            <person name="Liu D."/>
            <person name="Zhang X."/>
            <person name="Ji Z."/>
            <person name="Zhao W."/>
            <person name="Sun Y."/>
            <person name="Zhang Z."/>
            <person name="Bao J."/>
            <person name="Han Y."/>
            <person name="Dong L."/>
            <person name="Ji J."/>
            <person name="Chen P."/>
            <person name="Wu S."/>
            <person name="Liu J."/>
            <person name="Xiao Y."/>
            <person name="Bu D."/>
            <person name="Tan J."/>
            <person name="Yang L."/>
            <person name="Ye C."/>
            <person name="Zhang J."/>
            <person name="Xu J."/>
            <person name="Zhou Y."/>
            <person name="Yu Y."/>
            <person name="Zhang B."/>
            <person name="Zhuang S."/>
            <person name="Wei H."/>
            <person name="Liu B."/>
            <person name="Lei M."/>
            <person name="Yu H."/>
            <person name="Li Y."/>
            <person name="Xu H."/>
            <person name="Wei S."/>
            <person name="He X."/>
            <person name="Fang L."/>
            <person name="Zhang Z."/>
            <person name="Zhang Y."/>
            <person name="Huang X."/>
            <person name="Su Z."/>
            <person name="Tong W."/>
            <person name="Li J."/>
            <person name="Tong Z."/>
            <person name="Li S."/>
            <person name="Ye J."/>
            <person name="Wang L."/>
            <person name="Fang L."/>
            <person name="Lei T."/>
            <person name="Chen C.-S."/>
            <person name="Chen H.-C."/>
            <person name="Xu Z."/>
            <person name="Li H."/>
            <person name="Huang H."/>
            <person name="Zhang F."/>
            <person name="Xu H."/>
            <person name="Li N."/>
            <person name="Zhao C."/>
            <person name="Li S."/>
            <person name="Dong L."/>
            <person name="Huang Y."/>
            <person name="Li L."/>
            <person name="Xi Y."/>
            <person name="Qi Q."/>
            <person name="Li W."/>
            <person name="Zhang B."/>
            <person name="Hu W."/>
            <person name="Zhang Y."/>
            <person name="Tian X."/>
            <person name="Jiao Y."/>
            <person name="Liang X."/>
            <person name="Jin J."/>
            <person name="Gao L."/>
            <person name="Zheng W."/>
            <person name="Hao B."/>
            <person name="Liu S.-M."/>
            <person name="Wang W."/>
            <person name="Yuan L."/>
            <person name="Cao M."/>
            <person name="McDermott J."/>
            <person name="Samudrala R."/>
            <person name="Wang J."/>
            <person name="Wong G.K.-S."/>
            <person name="Yang H."/>
        </authorList>
    </citation>
    <scope>NUCLEOTIDE SEQUENCE [LARGE SCALE GENOMIC DNA]</scope>
    <source>
        <strain>cv. 93-11</strain>
    </source>
</reference>
<reference key="2">
    <citation type="journal article" date="2004" name="Trends Plant Sci.">
        <title>Plant actin-related proteins.</title>
        <authorList>
            <person name="Kandasamy M.K."/>
            <person name="Deal R.B."/>
            <person name="McKinney E.C."/>
            <person name="Meagher R.B."/>
        </authorList>
    </citation>
    <scope>REVIEW</scope>
    <scope>GENE FAMILY</scope>
    <scope>NOMENCLATURE</scope>
</reference>
<organism>
    <name type="scientific">Oryza sativa subsp. indica</name>
    <name type="common">Rice</name>
    <dbReference type="NCBI Taxonomy" id="39946"/>
    <lineage>
        <taxon>Eukaryota</taxon>
        <taxon>Viridiplantae</taxon>
        <taxon>Streptophyta</taxon>
        <taxon>Embryophyta</taxon>
        <taxon>Tracheophyta</taxon>
        <taxon>Spermatophyta</taxon>
        <taxon>Magnoliopsida</taxon>
        <taxon>Liliopsida</taxon>
        <taxon>Poales</taxon>
        <taxon>Poaceae</taxon>
        <taxon>BOP clade</taxon>
        <taxon>Oryzoideae</taxon>
        <taxon>Oryzeae</taxon>
        <taxon>Oryzinae</taxon>
        <taxon>Oryza</taxon>
        <taxon>Oryza sativa</taxon>
    </lineage>
</organism>
<accession>A2YUL5</accession>
<sequence length="389" mass="43852">MDSGNVVVCDNGTGYVKCGFAGENFPTSVFPCVVGRPLLRYEESLQEQELTDIVVGAACADLRHQLDVSYPVTNGIVQSWDDMGHIWDHAFYSELKVDPSECKILLTDPPLNPVKNREKMIETMFEKYNFAGVFIQVQAVLSLYAQGLLTGLVIDSGDGVTHVVPVVDGFSYPHITKRMNVAGRHITSYLVDLLSRRGYAMNKSADFETVREIKEKLCYLSYDYKREYQLGLETTILVKSYTLPDGRVIKVGTERFQAPEALFTPELIDVEGDGMADMAFRCIQEMDIDNRMTLYQHIVLSGGSTMYPGLPSRLEKEMLDRYLDVVLKGNKDGLKKLRLRIEDPPRRKHMVYLGGAVLAGIMKDAPEFWITRQEYQEEGLACLRKCGQA</sequence>
<gene>
    <name type="primary">ARP2</name>
    <name type="ORF">OsI_028008</name>
</gene>
<name>ARP2_ORYSI</name>
<evidence type="ECO:0000250" key="1"/>
<evidence type="ECO:0000305" key="2"/>
<keyword id="KW-0009">Actin-binding</keyword>
<keyword id="KW-0067">ATP-binding</keyword>
<keyword id="KW-0963">Cytoplasm</keyword>
<keyword id="KW-0206">Cytoskeleton</keyword>
<keyword id="KW-0217">Developmental protein</keyword>
<keyword id="KW-0547">Nucleotide-binding</keyword>
<keyword id="KW-1185">Reference proteome</keyword>
<protein>
    <recommendedName>
        <fullName>Actin-related protein 2</fullName>
    </recommendedName>
</protein>
<dbReference type="EMBL" id="CM000133">
    <property type="status" value="NOT_ANNOTATED_CDS"/>
    <property type="molecule type" value="Genomic_DNA"/>
</dbReference>
<dbReference type="SMR" id="A2YUL5"/>
<dbReference type="STRING" id="39946.A2YUL5"/>
<dbReference type="EnsemblPlants" id="OsKYG_08g0013340.01">
    <property type="protein sequence ID" value="OsKYG_08g0013340.01"/>
    <property type="gene ID" value="OsKYG_08g0013340"/>
</dbReference>
<dbReference type="EnsemblPlants" id="OsLima_08g0013230.01">
    <property type="protein sequence ID" value="OsLima_08g0013230.01"/>
    <property type="gene ID" value="OsLima_08g0013230"/>
</dbReference>
<dbReference type="EnsemblPlants" id="OsLima_08g0013230.02">
    <property type="protein sequence ID" value="OsLima_08g0013230.02"/>
    <property type="gene ID" value="OsLima_08g0013230"/>
</dbReference>
<dbReference type="EnsemblPlants" id="OsMH63_08G013920_01">
    <property type="protein sequence ID" value="OsMH63_08G013920_01"/>
    <property type="gene ID" value="OsMH63_08G013920"/>
</dbReference>
<dbReference type="EnsemblPlants" id="OsMH63_08G013920_02">
    <property type="protein sequence ID" value="OsMH63_08G013920_02"/>
    <property type="gene ID" value="OsMH63_08G013920"/>
</dbReference>
<dbReference type="EnsemblPlants" id="OsZS97_08G013620_01">
    <property type="protein sequence ID" value="OsZS97_08G013620_01"/>
    <property type="gene ID" value="OsZS97_08G013620"/>
</dbReference>
<dbReference type="EnsemblPlants" id="OsZS97_08G013620_02">
    <property type="protein sequence ID" value="OsZS97_08G013620_02"/>
    <property type="gene ID" value="OsZS97_08G013620"/>
</dbReference>
<dbReference type="Gramene" id="OsKYG_08g0013340.01">
    <property type="protein sequence ID" value="OsKYG_08g0013340.01"/>
    <property type="gene ID" value="OsKYG_08g0013340"/>
</dbReference>
<dbReference type="Gramene" id="OsLima_08g0013230.01">
    <property type="protein sequence ID" value="OsLima_08g0013230.01"/>
    <property type="gene ID" value="OsLima_08g0013230"/>
</dbReference>
<dbReference type="Gramene" id="OsLima_08g0013230.02">
    <property type="protein sequence ID" value="OsLima_08g0013230.02"/>
    <property type="gene ID" value="OsLima_08g0013230"/>
</dbReference>
<dbReference type="Gramene" id="OsMH63_08G013920_01">
    <property type="protein sequence ID" value="OsMH63_08G013920_01"/>
    <property type="gene ID" value="OsMH63_08G013920"/>
</dbReference>
<dbReference type="Gramene" id="OsMH63_08G013920_02">
    <property type="protein sequence ID" value="OsMH63_08G013920_02"/>
    <property type="gene ID" value="OsMH63_08G013920"/>
</dbReference>
<dbReference type="Gramene" id="OsZS97_08G013620_01">
    <property type="protein sequence ID" value="OsZS97_08G013620_01"/>
    <property type="gene ID" value="OsZS97_08G013620"/>
</dbReference>
<dbReference type="Gramene" id="OsZS97_08G013620_02">
    <property type="protein sequence ID" value="OsZS97_08G013620_02"/>
    <property type="gene ID" value="OsZS97_08G013620"/>
</dbReference>
<dbReference type="Proteomes" id="UP000007015">
    <property type="component" value="Chromosome 8"/>
</dbReference>
<dbReference type="GO" id="GO:0005737">
    <property type="term" value="C:cytoplasm"/>
    <property type="evidence" value="ECO:0007669"/>
    <property type="project" value="UniProtKB-KW"/>
</dbReference>
<dbReference type="GO" id="GO:0005856">
    <property type="term" value="C:cytoskeleton"/>
    <property type="evidence" value="ECO:0007669"/>
    <property type="project" value="UniProtKB-SubCell"/>
</dbReference>
<dbReference type="GO" id="GO:0003779">
    <property type="term" value="F:actin binding"/>
    <property type="evidence" value="ECO:0007669"/>
    <property type="project" value="UniProtKB-KW"/>
</dbReference>
<dbReference type="GO" id="GO:0005524">
    <property type="term" value="F:ATP binding"/>
    <property type="evidence" value="ECO:0007669"/>
    <property type="project" value="UniProtKB-KW"/>
</dbReference>
<dbReference type="CDD" id="cd10220">
    <property type="entry name" value="ASKHA_NBD_Arp2"/>
    <property type="match status" value="1"/>
</dbReference>
<dbReference type="FunFam" id="3.30.420.40:FF:000148">
    <property type="entry name" value="Actin, alpha skeletal muscle"/>
    <property type="match status" value="1"/>
</dbReference>
<dbReference type="FunFam" id="3.90.640.10:FF:000005">
    <property type="entry name" value="Actin-related protein 2"/>
    <property type="match status" value="1"/>
</dbReference>
<dbReference type="Gene3D" id="3.30.420.40">
    <property type="match status" value="2"/>
</dbReference>
<dbReference type="Gene3D" id="3.90.640.10">
    <property type="entry name" value="Actin, Chain A, domain 4"/>
    <property type="match status" value="1"/>
</dbReference>
<dbReference type="InterPro" id="IPR004000">
    <property type="entry name" value="Actin"/>
</dbReference>
<dbReference type="InterPro" id="IPR043129">
    <property type="entry name" value="ATPase_NBD"/>
</dbReference>
<dbReference type="PANTHER" id="PTHR11937">
    <property type="entry name" value="ACTIN"/>
    <property type="match status" value="1"/>
</dbReference>
<dbReference type="Pfam" id="PF00022">
    <property type="entry name" value="Actin"/>
    <property type="match status" value="1"/>
</dbReference>
<dbReference type="PRINTS" id="PR00190">
    <property type="entry name" value="ACTIN"/>
</dbReference>
<dbReference type="SMART" id="SM00268">
    <property type="entry name" value="ACTIN"/>
    <property type="match status" value="1"/>
</dbReference>
<dbReference type="SUPFAM" id="SSF53067">
    <property type="entry name" value="Actin-like ATPase domain"/>
    <property type="match status" value="2"/>
</dbReference>
<comment type="function">
    <text evidence="1">Functions as ATP-binding component of the Arp2/3 complex which is involved in regulation of actin polymerization and together with an activating nucleation-promoting factor (NPF) mediates the formation of branched actin networks. Seems to contact the pointed end of the daughter actin filament. Regulates the directionality of cell expansion by regulating the actin organization, and thus the microtubules distribution and the fusion of small vacuoles (By similarity).</text>
</comment>
<comment type="subunit">
    <text evidence="1">Component of the Arp2/3 complex.</text>
</comment>
<comment type="subcellular location">
    <subcellularLocation>
        <location evidence="1">Cytoplasm</location>
        <location evidence="1">Cytoskeleton</location>
    </subcellularLocation>
</comment>
<comment type="similarity">
    <text evidence="2">Belongs to the actin family. ARP2 subfamily.</text>
</comment>
<comment type="sequence caution" evidence="2">
    <conflict type="frameshift">
        <sequence resource="EMBL" id="CM000133"/>
    </conflict>
</comment>
<feature type="chain" id="PRO_0000320524" description="Actin-related protein 2">
    <location>
        <begin position="1"/>
        <end position="389"/>
    </location>
</feature>
<feature type="binding site" evidence="1">
    <location>
        <begin position="157"/>
        <end position="159"/>
    </location>
    <ligand>
        <name>ATP</name>
        <dbReference type="ChEBI" id="CHEBI:30616"/>
    </ligand>
</feature>
<feature type="binding site" evidence="1">
    <location>
        <begin position="211"/>
        <end position="215"/>
    </location>
    <ligand>
        <name>ATP</name>
        <dbReference type="ChEBI" id="CHEBI:30616"/>
    </ligand>
</feature>
<feature type="binding site" evidence="1">
    <location>
        <begin position="302"/>
        <end position="307"/>
    </location>
    <ligand>
        <name>ATP</name>
        <dbReference type="ChEBI" id="CHEBI:30616"/>
    </ligand>
</feature>
<proteinExistence type="inferred from homology"/>